<sequence>MKITLIAVGTKMPSWVTTGFEEYQRRFPKDMPFELIEIPAGKRGKNADIKRILEQEGKAMLAACGKGKVVTLDIPGKPWTTPQLAEQLEAWKNDGRDVCLLIGGPEGLSPECKAAAEQSWSLSPLTLPHPLVRVVVAESLYRAWSLTTNHPYHRE</sequence>
<feature type="chain" id="PRO_1000061788" description="Ribosomal RNA large subunit methyltransferase H">
    <location>
        <begin position="1"/>
        <end position="155"/>
    </location>
</feature>
<feature type="binding site" evidence="1">
    <location>
        <position position="72"/>
    </location>
    <ligand>
        <name>S-adenosyl-L-methionine</name>
        <dbReference type="ChEBI" id="CHEBI:59789"/>
    </ligand>
</feature>
<feature type="binding site" evidence="1">
    <location>
        <position position="103"/>
    </location>
    <ligand>
        <name>S-adenosyl-L-methionine</name>
        <dbReference type="ChEBI" id="CHEBI:59789"/>
    </ligand>
</feature>
<feature type="binding site" evidence="1">
    <location>
        <begin position="122"/>
        <end position="127"/>
    </location>
    <ligand>
        <name>S-adenosyl-L-methionine</name>
        <dbReference type="ChEBI" id="CHEBI:59789"/>
    </ligand>
</feature>
<name>RLMH_HAEIG</name>
<proteinExistence type="inferred from homology"/>
<organism>
    <name type="scientific">Haemophilus influenzae (strain PittGG)</name>
    <dbReference type="NCBI Taxonomy" id="374931"/>
    <lineage>
        <taxon>Bacteria</taxon>
        <taxon>Pseudomonadati</taxon>
        <taxon>Pseudomonadota</taxon>
        <taxon>Gammaproteobacteria</taxon>
        <taxon>Pasteurellales</taxon>
        <taxon>Pasteurellaceae</taxon>
        <taxon>Haemophilus</taxon>
    </lineage>
</organism>
<evidence type="ECO:0000255" key="1">
    <source>
        <dbReference type="HAMAP-Rule" id="MF_00658"/>
    </source>
</evidence>
<protein>
    <recommendedName>
        <fullName evidence="1">Ribosomal RNA large subunit methyltransferase H</fullName>
        <ecNumber evidence="1">2.1.1.177</ecNumber>
    </recommendedName>
    <alternativeName>
        <fullName evidence="1">23S rRNA (pseudouridine1915-N3)-methyltransferase</fullName>
    </alternativeName>
    <alternativeName>
        <fullName evidence="1">23S rRNA m3Psi1915 methyltransferase</fullName>
    </alternativeName>
    <alternativeName>
        <fullName evidence="1">rRNA (pseudouridine-N3-)-methyltransferase RlmH</fullName>
    </alternativeName>
</protein>
<gene>
    <name evidence="1" type="primary">rlmH</name>
    <name type="ordered locus">CGSHiGG_02660</name>
</gene>
<keyword id="KW-0963">Cytoplasm</keyword>
<keyword id="KW-0489">Methyltransferase</keyword>
<keyword id="KW-0698">rRNA processing</keyword>
<keyword id="KW-0949">S-adenosyl-L-methionine</keyword>
<keyword id="KW-0808">Transferase</keyword>
<reference key="1">
    <citation type="journal article" date="2007" name="Genome Biol.">
        <title>Characterization and modeling of the Haemophilus influenzae core and supragenomes based on the complete genomic sequences of Rd and 12 clinical nontypeable strains.</title>
        <authorList>
            <person name="Hogg J.S."/>
            <person name="Hu F.Z."/>
            <person name="Janto B."/>
            <person name="Boissy R."/>
            <person name="Hayes J."/>
            <person name="Keefe R."/>
            <person name="Post J.C."/>
            <person name="Ehrlich G.D."/>
        </authorList>
    </citation>
    <scope>NUCLEOTIDE SEQUENCE [LARGE SCALE GENOMIC DNA]</scope>
    <source>
        <strain>PittGG</strain>
    </source>
</reference>
<dbReference type="EC" id="2.1.1.177" evidence="1"/>
<dbReference type="EMBL" id="CP000672">
    <property type="protein sequence ID" value="ABQ99558.1"/>
    <property type="molecule type" value="Genomic_DNA"/>
</dbReference>
<dbReference type="SMR" id="A5UFK3"/>
<dbReference type="KEGG" id="hiq:CGSHiGG_02660"/>
<dbReference type="HOGENOM" id="CLU_100552_1_0_6"/>
<dbReference type="Proteomes" id="UP000001990">
    <property type="component" value="Chromosome"/>
</dbReference>
<dbReference type="GO" id="GO:0005737">
    <property type="term" value="C:cytoplasm"/>
    <property type="evidence" value="ECO:0007669"/>
    <property type="project" value="UniProtKB-SubCell"/>
</dbReference>
<dbReference type="GO" id="GO:0070038">
    <property type="term" value="F:rRNA (pseudouridine-N3-)-methyltransferase activity"/>
    <property type="evidence" value="ECO:0007669"/>
    <property type="project" value="UniProtKB-UniRule"/>
</dbReference>
<dbReference type="CDD" id="cd18081">
    <property type="entry name" value="RlmH-like"/>
    <property type="match status" value="1"/>
</dbReference>
<dbReference type="Gene3D" id="3.40.1280.10">
    <property type="match status" value="1"/>
</dbReference>
<dbReference type="HAMAP" id="MF_00658">
    <property type="entry name" value="23SrRNA_methyltr_H"/>
    <property type="match status" value="1"/>
</dbReference>
<dbReference type="InterPro" id="IPR029028">
    <property type="entry name" value="Alpha/beta_knot_MTases"/>
</dbReference>
<dbReference type="InterPro" id="IPR003742">
    <property type="entry name" value="RlmH-like"/>
</dbReference>
<dbReference type="InterPro" id="IPR029026">
    <property type="entry name" value="tRNA_m1G_MTases_N"/>
</dbReference>
<dbReference type="NCBIfam" id="NF000984">
    <property type="entry name" value="PRK00103.1-1"/>
    <property type="match status" value="1"/>
</dbReference>
<dbReference type="NCBIfam" id="NF000986">
    <property type="entry name" value="PRK00103.1-4"/>
    <property type="match status" value="1"/>
</dbReference>
<dbReference type="NCBIfam" id="TIGR00246">
    <property type="entry name" value="tRNA_RlmH_YbeA"/>
    <property type="match status" value="1"/>
</dbReference>
<dbReference type="PANTHER" id="PTHR33603">
    <property type="entry name" value="METHYLTRANSFERASE"/>
    <property type="match status" value="1"/>
</dbReference>
<dbReference type="PANTHER" id="PTHR33603:SF1">
    <property type="entry name" value="RIBOSOMAL RNA LARGE SUBUNIT METHYLTRANSFERASE H"/>
    <property type="match status" value="1"/>
</dbReference>
<dbReference type="Pfam" id="PF02590">
    <property type="entry name" value="SPOUT_MTase"/>
    <property type="match status" value="1"/>
</dbReference>
<dbReference type="PIRSF" id="PIRSF004505">
    <property type="entry name" value="MT_bac"/>
    <property type="match status" value="1"/>
</dbReference>
<dbReference type="SUPFAM" id="SSF75217">
    <property type="entry name" value="alpha/beta knot"/>
    <property type="match status" value="1"/>
</dbReference>
<comment type="function">
    <text evidence="1">Specifically methylates the pseudouridine at position 1915 (m3Psi1915) in 23S rRNA.</text>
</comment>
<comment type="catalytic activity">
    <reaction evidence="1">
        <text>pseudouridine(1915) in 23S rRNA + S-adenosyl-L-methionine = N(3)-methylpseudouridine(1915) in 23S rRNA + S-adenosyl-L-homocysteine + H(+)</text>
        <dbReference type="Rhea" id="RHEA:42752"/>
        <dbReference type="Rhea" id="RHEA-COMP:10221"/>
        <dbReference type="Rhea" id="RHEA-COMP:10222"/>
        <dbReference type="ChEBI" id="CHEBI:15378"/>
        <dbReference type="ChEBI" id="CHEBI:57856"/>
        <dbReference type="ChEBI" id="CHEBI:59789"/>
        <dbReference type="ChEBI" id="CHEBI:65314"/>
        <dbReference type="ChEBI" id="CHEBI:74486"/>
        <dbReference type="EC" id="2.1.1.177"/>
    </reaction>
</comment>
<comment type="subunit">
    <text evidence="1">Homodimer.</text>
</comment>
<comment type="subcellular location">
    <subcellularLocation>
        <location evidence="1">Cytoplasm</location>
    </subcellularLocation>
</comment>
<comment type="similarity">
    <text evidence="1">Belongs to the RNA methyltransferase RlmH family.</text>
</comment>
<accession>A5UFK3</accession>